<organism>
    <name type="scientific">Shewanella piezotolerans (strain WP3 / JCM 13877)</name>
    <dbReference type="NCBI Taxonomy" id="225849"/>
    <lineage>
        <taxon>Bacteria</taxon>
        <taxon>Pseudomonadati</taxon>
        <taxon>Pseudomonadota</taxon>
        <taxon>Gammaproteobacteria</taxon>
        <taxon>Alteromonadales</taxon>
        <taxon>Shewanellaceae</taxon>
        <taxon>Shewanella</taxon>
    </lineage>
</organism>
<proteinExistence type="inferred from homology"/>
<comment type="function">
    <text evidence="1">Single strand-specific metallo-endoribonuclease involved in late-stage 70S ribosome quality control and in maturation of the 3' terminus of the 16S rRNA.</text>
</comment>
<comment type="cofactor">
    <cofactor evidence="1">
        <name>Zn(2+)</name>
        <dbReference type="ChEBI" id="CHEBI:29105"/>
    </cofactor>
    <text evidence="1">Binds 1 zinc ion.</text>
</comment>
<comment type="subcellular location">
    <subcellularLocation>
        <location evidence="1">Cytoplasm</location>
    </subcellularLocation>
</comment>
<comment type="similarity">
    <text evidence="1">Belongs to the endoribonuclease YbeY family.</text>
</comment>
<sequence>MTNTATSVELDLQVAVEGVELPSVQEMELWVKTALRDSMDQAELTIRIVDVAESQMLNSTYRGKDKPTNVLSFPFEAPPGIELPLLGDLVVCAAVVKQEAIDQNKPLNAHWAHMVVHGCLHLLGYDHIEDIEAEEMESLETQLIESLGYNNPYQEQ</sequence>
<dbReference type="EC" id="3.1.-.-" evidence="1"/>
<dbReference type="EMBL" id="CP000472">
    <property type="protein sequence ID" value="ACJ30584.1"/>
    <property type="molecule type" value="Genomic_DNA"/>
</dbReference>
<dbReference type="RefSeq" id="WP_020913926.1">
    <property type="nucleotide sequence ID" value="NC_011566.1"/>
</dbReference>
<dbReference type="SMR" id="B8CSF8"/>
<dbReference type="STRING" id="225849.swp_3909"/>
<dbReference type="KEGG" id="swp:swp_3909"/>
<dbReference type="eggNOG" id="COG0319">
    <property type="taxonomic scope" value="Bacteria"/>
</dbReference>
<dbReference type="HOGENOM" id="CLU_106710_0_1_6"/>
<dbReference type="OrthoDB" id="9807740at2"/>
<dbReference type="Proteomes" id="UP000000753">
    <property type="component" value="Chromosome"/>
</dbReference>
<dbReference type="GO" id="GO:0005737">
    <property type="term" value="C:cytoplasm"/>
    <property type="evidence" value="ECO:0007669"/>
    <property type="project" value="UniProtKB-SubCell"/>
</dbReference>
<dbReference type="GO" id="GO:0004222">
    <property type="term" value="F:metalloendopeptidase activity"/>
    <property type="evidence" value="ECO:0007669"/>
    <property type="project" value="InterPro"/>
</dbReference>
<dbReference type="GO" id="GO:0004521">
    <property type="term" value="F:RNA endonuclease activity"/>
    <property type="evidence" value="ECO:0007669"/>
    <property type="project" value="UniProtKB-UniRule"/>
</dbReference>
<dbReference type="GO" id="GO:0008270">
    <property type="term" value="F:zinc ion binding"/>
    <property type="evidence" value="ECO:0007669"/>
    <property type="project" value="UniProtKB-UniRule"/>
</dbReference>
<dbReference type="GO" id="GO:0006364">
    <property type="term" value="P:rRNA processing"/>
    <property type="evidence" value="ECO:0007669"/>
    <property type="project" value="UniProtKB-UniRule"/>
</dbReference>
<dbReference type="Gene3D" id="3.40.390.30">
    <property type="entry name" value="Metalloproteases ('zincins'), catalytic domain"/>
    <property type="match status" value="1"/>
</dbReference>
<dbReference type="HAMAP" id="MF_00009">
    <property type="entry name" value="Endoribonucl_YbeY"/>
    <property type="match status" value="1"/>
</dbReference>
<dbReference type="InterPro" id="IPR023091">
    <property type="entry name" value="MetalPrtase_cat_dom_sf_prd"/>
</dbReference>
<dbReference type="InterPro" id="IPR002036">
    <property type="entry name" value="YbeY"/>
</dbReference>
<dbReference type="InterPro" id="IPR020549">
    <property type="entry name" value="YbeY_CS"/>
</dbReference>
<dbReference type="NCBIfam" id="TIGR00043">
    <property type="entry name" value="rRNA maturation RNase YbeY"/>
    <property type="match status" value="1"/>
</dbReference>
<dbReference type="PANTHER" id="PTHR46986">
    <property type="entry name" value="ENDORIBONUCLEASE YBEY, CHLOROPLASTIC"/>
    <property type="match status" value="1"/>
</dbReference>
<dbReference type="PANTHER" id="PTHR46986:SF1">
    <property type="entry name" value="ENDORIBONUCLEASE YBEY, CHLOROPLASTIC"/>
    <property type="match status" value="1"/>
</dbReference>
<dbReference type="Pfam" id="PF02130">
    <property type="entry name" value="YbeY"/>
    <property type="match status" value="1"/>
</dbReference>
<dbReference type="SUPFAM" id="SSF55486">
    <property type="entry name" value="Metalloproteases ('zincins'), catalytic domain"/>
    <property type="match status" value="1"/>
</dbReference>
<dbReference type="PROSITE" id="PS01306">
    <property type="entry name" value="UPF0054"/>
    <property type="match status" value="1"/>
</dbReference>
<evidence type="ECO:0000255" key="1">
    <source>
        <dbReference type="HAMAP-Rule" id="MF_00009"/>
    </source>
</evidence>
<name>YBEY_SHEPW</name>
<keyword id="KW-0963">Cytoplasm</keyword>
<keyword id="KW-0255">Endonuclease</keyword>
<keyword id="KW-0378">Hydrolase</keyword>
<keyword id="KW-0479">Metal-binding</keyword>
<keyword id="KW-0540">Nuclease</keyword>
<keyword id="KW-0690">Ribosome biogenesis</keyword>
<keyword id="KW-0698">rRNA processing</keyword>
<keyword id="KW-0862">Zinc</keyword>
<protein>
    <recommendedName>
        <fullName evidence="1">Endoribonuclease YbeY</fullName>
        <ecNumber evidence="1">3.1.-.-</ecNumber>
    </recommendedName>
</protein>
<accession>B8CSF8</accession>
<reference key="1">
    <citation type="journal article" date="2008" name="PLoS ONE">
        <title>Environmental adaptation: genomic analysis of the piezotolerant and psychrotolerant deep-sea iron reducing bacterium Shewanella piezotolerans WP3.</title>
        <authorList>
            <person name="Wang F."/>
            <person name="Wang J."/>
            <person name="Jian H."/>
            <person name="Zhang B."/>
            <person name="Li S."/>
            <person name="Wang F."/>
            <person name="Zeng X."/>
            <person name="Gao L."/>
            <person name="Bartlett D.H."/>
            <person name="Yu J."/>
            <person name="Hu S."/>
            <person name="Xiao X."/>
        </authorList>
    </citation>
    <scope>NUCLEOTIDE SEQUENCE [LARGE SCALE GENOMIC DNA]</scope>
    <source>
        <strain>WP3 / JCM 13877</strain>
    </source>
</reference>
<feature type="chain" id="PRO_1000199994" description="Endoribonuclease YbeY">
    <location>
        <begin position="1"/>
        <end position="156"/>
    </location>
</feature>
<feature type="binding site" evidence="1">
    <location>
        <position position="117"/>
    </location>
    <ligand>
        <name>Zn(2+)</name>
        <dbReference type="ChEBI" id="CHEBI:29105"/>
        <note>catalytic</note>
    </ligand>
</feature>
<feature type="binding site" evidence="1">
    <location>
        <position position="121"/>
    </location>
    <ligand>
        <name>Zn(2+)</name>
        <dbReference type="ChEBI" id="CHEBI:29105"/>
        <note>catalytic</note>
    </ligand>
</feature>
<feature type="binding site" evidence="1">
    <location>
        <position position="127"/>
    </location>
    <ligand>
        <name>Zn(2+)</name>
        <dbReference type="ChEBI" id="CHEBI:29105"/>
        <note>catalytic</note>
    </ligand>
</feature>
<gene>
    <name evidence="1" type="primary">ybeY</name>
    <name type="ordered locus">swp_3909</name>
</gene>